<reference key="1">
    <citation type="journal article" date="1998" name="Science">
        <title>Genome sequence of the nematode C. elegans: a platform for investigating biology.</title>
        <authorList>
            <consortium name="The C. elegans sequencing consortium"/>
        </authorList>
    </citation>
    <scope>NUCLEOTIDE SEQUENCE [LARGE SCALE GENOMIC DNA]</scope>
    <source>
        <strain>Bristol N2</strain>
    </source>
</reference>
<accession>P41844</accession>
<proteinExistence type="predicted"/>
<feature type="chain" id="PRO_0000065473" description="Uncharacterized F-box protein T20B12.4">
    <location>
        <begin position="1"/>
        <end position="386"/>
    </location>
</feature>
<feature type="domain" description="F-box">
    <location>
        <begin position="29"/>
        <end position="76"/>
    </location>
</feature>
<sequence>MEEIENQSKRRIVSKKEINELSIYIGGFKYWKFLNEDCKIEVLKYLDYCSRCQLSICSKSDHKLVSITPLYVYEIEISDNERSLHSTSTKDFENIVVRVKFSQFSGYRFEVVFWQVEEDVHIRWFKYFGFKQKSVRSLIWKSCNYYEQSVKFAEKWMKVCNYEFQSINVDMNKYPMKSSTVRSLARCKTIRINATDIATYSWWLEKCPEKLDYLELKTLYSNKDTFTIPTDFLDFSQIKNAGTFYFWCRSAFTDEQFLNLKAKKFGFHCVNITANGINDFIKKWVNGHGVNEFQKALLWSAKLNNSFMIMRGIEFRSWDQTFREQEAEFCSAFNEEFLDGEKIQVYSRIDPYESITIYFSPDTISIIATGHRMTRNKKTFTRYQVP</sequence>
<gene>
    <name type="ORF">T20B12.4</name>
</gene>
<organism>
    <name type="scientific">Caenorhabditis elegans</name>
    <dbReference type="NCBI Taxonomy" id="6239"/>
    <lineage>
        <taxon>Eukaryota</taxon>
        <taxon>Metazoa</taxon>
        <taxon>Ecdysozoa</taxon>
        <taxon>Nematoda</taxon>
        <taxon>Chromadorea</taxon>
        <taxon>Rhabditida</taxon>
        <taxon>Rhabditina</taxon>
        <taxon>Rhabditomorpha</taxon>
        <taxon>Rhabditoidea</taxon>
        <taxon>Rhabditidae</taxon>
        <taxon>Peloderinae</taxon>
        <taxon>Caenorhabditis</taxon>
    </lineage>
</organism>
<protein>
    <recommendedName>
        <fullName>Uncharacterized F-box protein T20B12.4</fullName>
    </recommendedName>
</protein>
<name>YO94_CAEEL</name>
<keyword id="KW-1185">Reference proteome</keyword>
<dbReference type="EMBL" id="FO081094">
    <property type="protein sequence ID" value="CCD69073.1"/>
    <property type="molecule type" value="Genomic_DNA"/>
</dbReference>
<dbReference type="PIR" id="T16904">
    <property type="entry name" value="T16904"/>
</dbReference>
<dbReference type="RefSeq" id="NP_498630.2">
    <property type="nucleotide sequence ID" value="NM_066229.2"/>
</dbReference>
<dbReference type="PaxDb" id="6239-T20B12.4"/>
<dbReference type="EnsemblMetazoa" id="T20B12.4.1">
    <property type="protein sequence ID" value="T20B12.4.1"/>
    <property type="gene ID" value="WBGene00020602"/>
</dbReference>
<dbReference type="GeneID" id="188631"/>
<dbReference type="KEGG" id="cel:CELE_T20B12.4"/>
<dbReference type="UCSC" id="T20B12.4">
    <property type="organism name" value="c. elegans"/>
</dbReference>
<dbReference type="AGR" id="WB:WBGene00020602"/>
<dbReference type="CTD" id="188631"/>
<dbReference type="WormBase" id="T20B12.4">
    <property type="protein sequence ID" value="CE40212"/>
    <property type="gene ID" value="WBGene00020602"/>
</dbReference>
<dbReference type="eggNOG" id="ENOG502TG2I">
    <property type="taxonomic scope" value="Eukaryota"/>
</dbReference>
<dbReference type="GeneTree" id="ENSGT00390000001019"/>
<dbReference type="HOGENOM" id="CLU_065230_0_0_1"/>
<dbReference type="InParanoid" id="P41844"/>
<dbReference type="OrthoDB" id="5843099at2759"/>
<dbReference type="PhylomeDB" id="P41844"/>
<dbReference type="PRO" id="PR:P41844"/>
<dbReference type="Proteomes" id="UP000001940">
    <property type="component" value="Chromosome III"/>
</dbReference>
<dbReference type="InterPro" id="IPR012885">
    <property type="entry name" value="F-box-assoc_dom_typ2"/>
</dbReference>
<dbReference type="InterPro" id="IPR001810">
    <property type="entry name" value="F-box_dom"/>
</dbReference>
<dbReference type="InterPro" id="IPR042317">
    <property type="entry name" value="She-1-like"/>
</dbReference>
<dbReference type="PANTHER" id="PTHR31006:SF0">
    <property type="entry name" value="F-BOX ASSOCIATED DOMAIN-CONTAINING PROTEIN-RELATED"/>
    <property type="match status" value="1"/>
</dbReference>
<dbReference type="PANTHER" id="PTHR31006">
    <property type="entry name" value="F-BOX DOMAIN-CONTAINING PROTEIN-RELATED-RELATED"/>
    <property type="match status" value="1"/>
</dbReference>
<dbReference type="Pfam" id="PF00646">
    <property type="entry name" value="F-box"/>
    <property type="match status" value="1"/>
</dbReference>
<dbReference type="Pfam" id="PF07735">
    <property type="entry name" value="FBA_2"/>
    <property type="match status" value="1"/>
</dbReference>